<feature type="chain" id="PRO_0000261905" description="Glucose-1-phosphate adenylyltransferase">
    <location>
        <begin position="1"/>
        <end position="439"/>
    </location>
</feature>
<feature type="binding site" evidence="1">
    <location>
        <position position="122"/>
    </location>
    <ligand>
        <name>alpha-D-glucose 1-phosphate</name>
        <dbReference type="ChEBI" id="CHEBI:58601"/>
    </ligand>
</feature>
<feature type="binding site" evidence="1">
    <location>
        <position position="187"/>
    </location>
    <ligand>
        <name>alpha-D-glucose 1-phosphate</name>
        <dbReference type="ChEBI" id="CHEBI:58601"/>
    </ligand>
</feature>
<feature type="binding site" evidence="1">
    <location>
        <begin position="202"/>
        <end position="203"/>
    </location>
    <ligand>
        <name>alpha-D-glucose 1-phosphate</name>
        <dbReference type="ChEBI" id="CHEBI:58601"/>
    </ligand>
</feature>
<feature type="binding site" evidence="1">
    <location>
        <position position="220"/>
    </location>
    <ligand>
        <name>alpha-D-glucose 1-phosphate</name>
        <dbReference type="ChEBI" id="CHEBI:58601"/>
    </ligand>
</feature>
<evidence type="ECO:0000255" key="1">
    <source>
        <dbReference type="HAMAP-Rule" id="MF_00624"/>
    </source>
</evidence>
<proteinExistence type="inferred from homology"/>
<reference key="1">
    <citation type="journal article" date="2006" name="J. Bacteriol.">
        <title>The genome sequence of the obligately chemolithoautotrophic, facultatively anaerobic bacterium Thiobacillus denitrificans.</title>
        <authorList>
            <person name="Beller H.R."/>
            <person name="Chain P.S."/>
            <person name="Letain T.E."/>
            <person name="Chakicherla A."/>
            <person name="Larimer F.W."/>
            <person name="Richardson P.M."/>
            <person name="Coleman M.A."/>
            <person name="Wood A.P."/>
            <person name="Kelly D.P."/>
        </authorList>
    </citation>
    <scope>NUCLEOTIDE SEQUENCE [LARGE SCALE GENOMIC DNA]</scope>
    <source>
        <strain>ATCC 25259 / T1</strain>
    </source>
</reference>
<organism>
    <name type="scientific">Thiobacillus denitrificans (strain ATCC 25259 / T1)</name>
    <dbReference type="NCBI Taxonomy" id="292415"/>
    <lineage>
        <taxon>Bacteria</taxon>
        <taxon>Pseudomonadati</taxon>
        <taxon>Pseudomonadota</taxon>
        <taxon>Betaproteobacteria</taxon>
        <taxon>Nitrosomonadales</taxon>
        <taxon>Thiobacillaceae</taxon>
        <taxon>Thiobacillus</taxon>
    </lineage>
</organism>
<name>GLGC_THIDA</name>
<dbReference type="EC" id="2.7.7.27" evidence="1"/>
<dbReference type="EMBL" id="CP000116">
    <property type="protein sequence ID" value="AAZ98014.1"/>
    <property type="molecule type" value="Genomic_DNA"/>
</dbReference>
<dbReference type="RefSeq" id="WP_011312573.1">
    <property type="nucleotide sequence ID" value="NC_007404.1"/>
</dbReference>
<dbReference type="SMR" id="Q3SH75"/>
<dbReference type="STRING" id="292415.Tbd_2061"/>
<dbReference type="KEGG" id="tbd:Tbd_2061"/>
<dbReference type="eggNOG" id="COG0448">
    <property type="taxonomic scope" value="Bacteria"/>
</dbReference>
<dbReference type="HOGENOM" id="CLU_029499_14_1_4"/>
<dbReference type="UniPathway" id="UPA00164"/>
<dbReference type="Proteomes" id="UP000008291">
    <property type="component" value="Chromosome"/>
</dbReference>
<dbReference type="GO" id="GO:0005524">
    <property type="term" value="F:ATP binding"/>
    <property type="evidence" value="ECO:0007669"/>
    <property type="project" value="UniProtKB-KW"/>
</dbReference>
<dbReference type="GO" id="GO:0008878">
    <property type="term" value="F:glucose-1-phosphate adenylyltransferase activity"/>
    <property type="evidence" value="ECO:0007669"/>
    <property type="project" value="UniProtKB-UniRule"/>
</dbReference>
<dbReference type="GO" id="GO:0005978">
    <property type="term" value="P:glycogen biosynthetic process"/>
    <property type="evidence" value="ECO:0007669"/>
    <property type="project" value="UniProtKB-UniRule"/>
</dbReference>
<dbReference type="CDD" id="cd02508">
    <property type="entry name" value="ADP_Glucose_PP"/>
    <property type="match status" value="1"/>
</dbReference>
<dbReference type="CDD" id="cd04651">
    <property type="entry name" value="LbH_G1P_AT_C"/>
    <property type="match status" value="1"/>
</dbReference>
<dbReference type="Gene3D" id="2.160.10.10">
    <property type="entry name" value="Hexapeptide repeat proteins"/>
    <property type="match status" value="1"/>
</dbReference>
<dbReference type="Gene3D" id="3.90.550.10">
    <property type="entry name" value="Spore Coat Polysaccharide Biosynthesis Protein SpsA, Chain A"/>
    <property type="match status" value="1"/>
</dbReference>
<dbReference type="HAMAP" id="MF_00624">
    <property type="entry name" value="GlgC"/>
    <property type="match status" value="1"/>
</dbReference>
<dbReference type="InterPro" id="IPR011831">
    <property type="entry name" value="ADP-Glc_PPase"/>
</dbReference>
<dbReference type="InterPro" id="IPR005836">
    <property type="entry name" value="ADP_Glu_pyroP_CS"/>
</dbReference>
<dbReference type="InterPro" id="IPR023049">
    <property type="entry name" value="GlgC_bac"/>
</dbReference>
<dbReference type="InterPro" id="IPR056818">
    <property type="entry name" value="GlmU/GlgC-like_hexapep"/>
</dbReference>
<dbReference type="InterPro" id="IPR005835">
    <property type="entry name" value="NTP_transferase_dom"/>
</dbReference>
<dbReference type="InterPro" id="IPR029044">
    <property type="entry name" value="Nucleotide-diphossugar_trans"/>
</dbReference>
<dbReference type="InterPro" id="IPR011004">
    <property type="entry name" value="Trimer_LpxA-like_sf"/>
</dbReference>
<dbReference type="NCBIfam" id="TIGR02091">
    <property type="entry name" value="glgC"/>
    <property type="match status" value="1"/>
</dbReference>
<dbReference type="NCBIfam" id="NF001947">
    <property type="entry name" value="PRK00725.1"/>
    <property type="match status" value="1"/>
</dbReference>
<dbReference type="NCBIfam" id="NF002023">
    <property type="entry name" value="PRK00844.1"/>
    <property type="match status" value="1"/>
</dbReference>
<dbReference type="PANTHER" id="PTHR43523:SF2">
    <property type="entry name" value="GLUCOSE-1-PHOSPHATE ADENYLYLTRANSFERASE"/>
    <property type="match status" value="1"/>
</dbReference>
<dbReference type="PANTHER" id="PTHR43523">
    <property type="entry name" value="GLUCOSE-1-PHOSPHATE ADENYLYLTRANSFERASE-RELATED"/>
    <property type="match status" value="1"/>
</dbReference>
<dbReference type="Pfam" id="PF24894">
    <property type="entry name" value="Hexapep_GlmU"/>
    <property type="match status" value="1"/>
</dbReference>
<dbReference type="Pfam" id="PF00483">
    <property type="entry name" value="NTP_transferase"/>
    <property type="match status" value="1"/>
</dbReference>
<dbReference type="SUPFAM" id="SSF53448">
    <property type="entry name" value="Nucleotide-diphospho-sugar transferases"/>
    <property type="match status" value="1"/>
</dbReference>
<dbReference type="SUPFAM" id="SSF51161">
    <property type="entry name" value="Trimeric LpxA-like enzymes"/>
    <property type="match status" value="1"/>
</dbReference>
<dbReference type="PROSITE" id="PS00808">
    <property type="entry name" value="ADP_GLC_PYROPHOSPH_1"/>
    <property type="match status" value="1"/>
</dbReference>
<dbReference type="PROSITE" id="PS00809">
    <property type="entry name" value="ADP_GLC_PYROPHOSPH_2"/>
    <property type="match status" value="1"/>
</dbReference>
<dbReference type="PROSITE" id="PS00810">
    <property type="entry name" value="ADP_GLC_PYROPHOSPH_3"/>
    <property type="match status" value="1"/>
</dbReference>
<sequence>MTISKDDQARLYRYYTEPTLVTELTRKTLALVLAGGEGSRLKDLTAWRAKPAVPIGGKYRIIDFPLSNCVNSGIRRIGVLTQYKSHSLIRHLQRAWGLMRTEVGEFVEILPAQQRTHKKEWYQGTADALFQNLDIMQRHHPEYVLVLGGDHVYTMDYTQMLLYHVQTGADVTVGSVEVPVAEAAAFGVMSVDESLRITEFNEKPREPDSMPGKPGTALVSMGIYVFSKDFLYKALIEDAGATRSSHDFGKDIIPSSISRARIMAFPFRDREGKPGYWRDVGALNCYWQTNMDLCSIEPALNLYDCEWPIWTYQPQYPPAKFIFDDEGRRGEAIDSLVAGGCVLSGARVKRSVLFFATTVGCSSLVKDSVILPKVRIGRNCRISCAIIDKGTVIPDGTVIGEDPVEDAKRFHVTPEGIVLVTPRMLGQNIYARWEDEYDG</sequence>
<comment type="function">
    <text evidence="1">Involved in the biosynthesis of ADP-glucose, a building block required for the elongation reactions to produce glycogen. Catalyzes the reaction between ATP and alpha-D-glucose 1-phosphate (G1P) to produce pyrophosphate and ADP-Glc.</text>
</comment>
<comment type="catalytic activity">
    <reaction evidence="1">
        <text>alpha-D-glucose 1-phosphate + ATP + H(+) = ADP-alpha-D-glucose + diphosphate</text>
        <dbReference type="Rhea" id="RHEA:12120"/>
        <dbReference type="ChEBI" id="CHEBI:15378"/>
        <dbReference type="ChEBI" id="CHEBI:30616"/>
        <dbReference type="ChEBI" id="CHEBI:33019"/>
        <dbReference type="ChEBI" id="CHEBI:57498"/>
        <dbReference type="ChEBI" id="CHEBI:58601"/>
        <dbReference type="EC" id="2.7.7.27"/>
    </reaction>
</comment>
<comment type="pathway">
    <text evidence="1">Glycan biosynthesis; glycogen biosynthesis.</text>
</comment>
<comment type="subunit">
    <text evidence="1">Homotetramer.</text>
</comment>
<comment type="similarity">
    <text evidence="1">Belongs to the bacterial/plant glucose-1-phosphate adenylyltransferase family.</text>
</comment>
<keyword id="KW-0067">ATP-binding</keyword>
<keyword id="KW-0119">Carbohydrate metabolism</keyword>
<keyword id="KW-0320">Glycogen biosynthesis</keyword>
<keyword id="KW-0321">Glycogen metabolism</keyword>
<keyword id="KW-0547">Nucleotide-binding</keyword>
<keyword id="KW-0548">Nucleotidyltransferase</keyword>
<keyword id="KW-1185">Reference proteome</keyword>
<keyword id="KW-0808">Transferase</keyword>
<protein>
    <recommendedName>
        <fullName evidence="1">Glucose-1-phosphate adenylyltransferase</fullName>
        <ecNumber evidence="1">2.7.7.27</ecNumber>
    </recommendedName>
    <alternativeName>
        <fullName evidence="1">ADP-glucose pyrophosphorylase</fullName>
        <shortName evidence="1">ADPGlc PPase</shortName>
    </alternativeName>
    <alternativeName>
        <fullName evidence="1">ADP-glucose synthase</fullName>
    </alternativeName>
</protein>
<accession>Q3SH75</accession>
<gene>
    <name evidence="1" type="primary">glgC</name>
    <name type="ordered locus">Tbd_2061</name>
</gene>